<gene>
    <name type="primary">Birc6</name>
    <name type="synonym">Kiaa1289</name>
</gene>
<protein>
    <recommendedName>
        <fullName evidence="1">Dual E2 ubiquitin-conjugating enzyme/E3 ubiquitin-protein ligase BIRC6</fullName>
        <ecNumber evidence="1">2.3.2.24</ecNumber>
    </recommendedName>
    <alternativeName>
        <fullName evidence="10">BIR repeat-containing ubiquitin-conjugating enzyme</fullName>
        <shortName evidence="10">BRUCE</shortName>
    </alternativeName>
    <alternativeName>
        <fullName>Baculoviral IAP repeat-containing protein 6</fullName>
    </alternativeName>
    <alternativeName>
        <fullName evidence="8">Ubiquitin-conjugating BIR domain enzyme apollon</fullName>
        <shortName evidence="8">APOLLON</shortName>
    </alternativeName>
</protein>
<proteinExistence type="evidence at protein level"/>
<comment type="function">
    <text evidence="1 5 6 7">Anti-apoptotic protein known as inhibitor of apoptosis (IAP) which can regulate cell death by controlling caspases and by acting as an E3 ubiquitin-protein ligase (PubMed:9628897, PubMed:15485903). Unlike most IAPs, does not contain a RING domain and it is not a RING-type E3 ligase (By similarity). Instead acts as a dual E2/E3 enzyme that combines ubiquitin conjugating (E2) and ubiquitin ligase (E3) activities in a single polypeptide (PubMed:15485903, PubMed:15300255). Ubiquitination is mediated by a non-canonical E1 ubiquitin activating enzyme UBA6 (By similarity). Ubiquitinates CASP3, CASP7 and CASP9 and inhibits their caspase activity; also ubiquitinates their procaspases but to a weaker extent (By similarity). Ubiquitinates pro-apoptotic factors DIABLO/SMAC and HTRA2 (PubMed:15300255). DIABLO/SMAC antagonizes the caspase inhibition activity of BIRC6 by competing for the same binding sites as the caspases (By similarity). Ubiquitinates the autophagy protein MAP1LC3B; this activity is also inhibited by DIABLO/SMAC (By similarity). Important regulator for the final stages of cytokinesis (By similarity). Crucial for normal vesicle targeting to the site of abscission, but also for the integrity of the midbody and the midbody ring, and its striking ubiquitin modification. Required for normal placenta development (By similarity).</text>
</comment>
<comment type="catalytic activity">
    <reaction evidence="1">
        <text>S-ubiquitinyl-[E1 ubiquitin-activating enzyme]-L-cysteine + [acceptor protein]-L-lysine = [E1 ubiquitin-activating enzyme]-L-cysteine + N(6)-monoubiquitinyl-[acceptor protein]-L-lysine.</text>
        <dbReference type="EC" id="2.3.2.24"/>
    </reaction>
</comment>
<comment type="activity regulation">
    <text evidence="1">Inhibited by DIABLO/SMAC, which competes for the substrate-binding sites on BIRC6 (By similarity). BIRC6 inhibits caspases and protease by ubiquitination but BIRC6 itself is subjected to protease cleavage by CASP3, CASP6, CASP7, CASP9 and HTRA2 by protease cleavage (By similarity).</text>
</comment>
<comment type="subunit">
    <text evidence="1 5">Homodimer; antiparallel. Interacts with DIABLO/SMAC, likely with higher affinity to SMAC dimer than SMAC monomer; this interaction blocks the substrate-binding site and inhibits the caspase inhibition activity of BIRC6. Interacts with RNF41, KIF23/MKLP1, USP8/UBPY, BIRC5/survivin, MAP2K1/MEK1, RAB8A/RAB8, RAB11A/RAB11, PLK1, EXOC3/SEC6 and EXOC4/SEC8 (By similarity).</text>
</comment>
<comment type="subcellular location">
    <subcellularLocation>
        <location evidence="1">Golgi apparatus</location>
        <location evidence="1">trans-Golgi network membrane</location>
    </subcellularLocation>
    <subcellularLocation>
        <location evidence="1">Endosome</location>
    </subcellularLocation>
    <subcellularLocation>
        <location evidence="1">Cytoplasm</location>
        <location evidence="1">Cytoskeleton</location>
        <location evidence="1">Spindle pole</location>
    </subcellularLocation>
    <subcellularLocation>
        <location evidence="1">Cytoplasm</location>
        <location evidence="1">Cytoskeleton</location>
        <location evidence="1">Microtubule organizing center</location>
        <location evidence="1">Centrosome</location>
    </subcellularLocation>
    <subcellularLocation>
        <location evidence="1">Midbody</location>
        <location evidence="1">Midbody ring</location>
    </subcellularLocation>
    <text evidence="1">Exhibits cell cycle-dependent localization. Concentrates in a pericentriolar compartment in interphase, moves partially to spindle poles in metaphase, and finally localizes to the spindle midzone and the midbody in telophase and during cytokinesis. On the midbody, localizes to the midbody ring, also called Flemming body. In interphase cells, localizes to the trans-Golgi network membrane and endosomes. During cytokinesis, a fraction moves to the midzone where it specifically arrives at the midbody ring. After abscission completion, travels with the midbody remnant into one daughter cell, and remains bound to it until a new midbody ring is formed during the next cell division.</text>
</comment>
<comment type="alternative products">
    <event type="alternative splicing"/>
    <isoform>
        <id>O88738-1</id>
        <name>1</name>
        <sequence type="displayed"/>
    </isoform>
    <isoform>
        <id>O88738-2</id>
        <name>2</name>
        <sequence type="described" ref="VSP_042537"/>
    </isoform>
    <isoform>
        <id>O88738-3</id>
        <name>3</name>
        <sequence type="described" ref="VSP_042536 VSP_042537"/>
    </isoform>
</comment>
<comment type="tissue specificity">
    <text evidence="7">Widely expressed. Highly expressed in the brain and kidney.</text>
</comment>
<comment type="domain">
    <text evidence="1">The BIR domain is essential for its anti-apoptotic function and is important for binding to DIABLO/SMAC and caspases.</text>
</comment>
<comment type="PTM">
    <text evidence="1">Ubiquitinated. Ubiquitination is mediated by RNF41 E3 ligase and leads to proteasomal degradation, impairing inhibition of apoptosis. Deubiquitinated by USP8/UBPY. Autoubiquitinated; mediated by E1 ubiquitin activating enzyme UBA6.</text>
</comment>
<comment type="PTM">
    <text evidence="1">Proteolytically cleaved. Acts as substrate for CASP3, CASP6, CASP7, CASP9 and HTRA2.</text>
</comment>
<comment type="disruption phenotype">
    <text evidence="6">Mice exhibit perinatal lethality and growth deficiencies, which are linked to a defect in proper placental development.</text>
</comment>
<comment type="similarity">
    <text evidence="11">Belongs to the BIRC6 family.</text>
</comment>
<comment type="sequence caution" evidence="11">
    <conflict type="erroneous initiation">
        <sequence resource="EMBL-CDS" id="BAC32373"/>
    </conflict>
    <text>Truncated N-terminus.</text>
</comment>
<comment type="sequence caution" evidence="11">
    <conflict type="erroneous initiation">
        <sequence resource="EMBL-CDS" id="BAC37801"/>
    </conflict>
    <text>Truncated N-terminus.</text>
</comment>
<comment type="sequence caution" evidence="11">
    <conflict type="erroneous initiation">
        <sequence resource="EMBL-CDS" id="CAA76720"/>
    </conflict>
    <text>Truncated N-terminus.</text>
</comment>
<sequence>MVTGCGAAPPGTVTERLPSVIVLSAGRKMAAAAAEASGPSCSSAAAAAGAGAAGVSEWLVLRDGCMRCDADGLHSLSYHPALNAILAVTSRGTIKVIDGTSGATLQASALSAKPGGQVKCQYISAVDKVIFVDDYAVGCRKDLNGILLLDTALQTPVSKQDDVVQLELPVTEAQQLLSACIEKIDVSSTEGYDLFITQLKDGLKNTSHETAANHKVAKWATVTFHLPHHVLKSIASAIVNELKKINQNVAALPVASSVMDRLSYLLPSARPELGVGPGRSVDRALMYSEANRRETFTSWPHVGYRWAQPDPMAQAGFYHQPASSGDDRAMCFTCSVCLVCWEPTDEPWSEHERHSPNCPFVKGEHTQNVPLSVTLATSPAQLPSADGADRIACFGSGSCPQFLAAATKRGKICIWDVSKLMKVHLKFEINAYDPAIVQQLILSGDPSSGVDSRRPTLAWLEDSSSCSDIPKLEGDSDDLLEDSDSEEHSRSDSVTGHTSQKEAMEVSLDITALSILQQPEKLQWEIVANVLEDTVKDLEELGANPSLTNSKSEKTKEKHQEQHNIPFPCLLAGGLLTYKSPATSPISSNSHRSLDGLSRTQGESISEQGSTDNESCTNSELNSPLVRRTLPVLLLYSIKESDEKAGKIFSQMNNIMSKSLHDDGFTVPQIIEMELDNQEQLLLQDPPVTYIQQFADAAASLTSPDSEKWNSVFPKPGALVQCLRLPKFAEEETLCIDSITPCADGIHLLVGLRTCSVESLSAINQVEALNNLNKLNSALCNRRKGDLESNLAVVNGANISVIQHESPADVPEHLLIRPEQRNVVSGGYLVLYKMNYTTRIVTLEEEPVKIQHIKDPQDTITSLILLPPDILDNREDDCEEPAEEMQLASKNGIEREKKSDISTLGHLVVTTQGGYVKVLDLSNFEILAKVEPPKKEGTEEQDTFVSVIYCSGTDRLCACTKGGELHFLQIGGTCDDIDEADILVDGSLSKGIEPALEGSRPLSNPSSPGISGVELLVDQPFTLEILTSLVELTRFETLTPRFSATVPPCWVEVQQEQQQRRHPQHLHQQHHGDAAQHTRTWKLQTDSNSWDEHVFELVLPKACMVGHVDFKFVLNSNITSVPQIQVTLLKNKAPGLGKANALNIEVEHNGNPSLVDLNEEMHHMDVEESQCLRLCPFLEDHKEDILCGPVWLASGLDLSGHAGMLTLTSPKLVKGMAGGKYRSFLIHVKAVSDRGAADEMCSSGLRPVVRLPSLKQQGHKGYSLASLLAKVAAGKEKSSNVKNENAGGTRKSENLRGCDLLQEVSVTIRRFKKTSICKERVQRCAMLQFSEFHEKLLNTLCRRSDDGQVTEHAQSLVLDALCWLAGVHSNGSGSSKEGNECLLSKTRKCLSDIVRVCFFEAGRSIAHKCARFLALCISNGKCEPCQPGFGSVLLKALLDNMCFLPAAATGGSVYWYFVLLNYVKDEDLAGCSTACAALLTAVSRQLQDRLTPLEALLQTRYGLYSSPFDPVLFDLEMSGSSWKTVYSSSTAVQSDEIDLSDVLSGNGRVSSCTAAEGSFTSLTGLLEVEPLHFTCVSTSDGTRIERDDASTFTVSSFGVPPAVGGLSSGTVGEASTALSSAAQVALQSLSHAMASAEQQLQVLQEKQQQLLKLQQQKAKLEAKLHQTTAAAAAAASAAAAAAAGPVHNAVPSNPVAAPGFFIHPSDVIPPTPKTTPLFMTPPLTPPNEAVSVVINAELAQLFPGSVIDPPAVNLAAQNKNSSKSRMNPLGSGLALAISHASHFLQPPPHQSIIIERMHSGARRFVTLDFGRPILLTDVLIPTCGDLASLSIDIWTLGEEVDGRRLVVATDISTHSLILHDLIPPPVCRFMKITVIGRYGSTNARAKIPLGFYYGHSYILPWESELKLMHDPLRGEGESASQPEIDQHLAMMVALQEDIQCRYNLACHRLEALLQSIDLPPLNSANNAQYFLRKPDKAVEEDSRVFSAYQDCIQLQLQLNLAHNAVQRLKVAIGASRKLLNETSGPEDLIQTSSTEQLRTIVRYLLDTLLSLLHSSNGHSVPAVLQSTFHAQACEELFKHLCISGTPKIRLHTGLLLVQLCGGERWWGQFLSNVLQELYNSEQLLIFPQDRVFMLLSCIGQRSLSNSGVLESLLNLLDNLLSPLQPELSMHRRTEGVLDIPMISWVVMLVSRLLDYVATVEDEAAAAKKPLNGKDRERFLTGNQWSFINNNLHTQNLNRSSKGGSSLDRLYSRKIRKQLVHHKQQLNLLKAKQKALVEQMEKEKIQSNKGSSYKLLVEQAKLKQATSKHFKDLIRLRRTAEWSRSNLDTEVTTTKESPEIEPLPFTLAHDRCISVVQKLVLFLLSMDFTCHADLLLFVCKVLARIANATRPTIHLCEIVNEPQLERLLLLLVGTDFNRGDISWGGAWAQYSLTCMLQDILAGELLAPVAAEAMEECTVSEDVGATAGDSDDSLQQSPAQLLETIDEPLTHEIAGTPPLSSLEKDKEIDLELLQDLMEVDIDPLDIDLEKDPLAAKVFKPISSTWYDYWGADYGTYNYNPYIGGLGMPVAKPPSNTEKNGSQTVSVSVSQALDARLEVGLEQQAELMLKMMSTLEADSILQALTNTSPTFSQSPTGTDDSLLGNLQPANQNSQLMIQLSSVPMLNVCFNKLFSMLQVHHVQLESLLQLWLTLSLNSSSSGNKENGADIFLYNANRIPVISLNQASIASFLTVLAWYPNTLLRTWCLVLHSLTLMTNMQLNSGSSSSIGIQETTAHLLVSDPNLIHVLVKFLSGTSPHGTNQHSPQVGPTATQAMQEFLTRLQVHLSSTCPQIFSELLLKLIHILSTERGAFQTGQGPLDAQVKLLEFTLEQNFEVVSVSTISAVIESVTFLVHHYITCSDKVMSRSGSDSSAGARACFGGLFANLIRPGDAKAVCGEMTRDQLMFDLLKLVNILVQLPLSSNREYSARVSVTTNTTDSVSDEEKVSGGKDVNGSSASTPGSPACVADLVLANQQIMSQILSALGLCNSSAMAMIIGASGLHLTKHENFHGGLDAISVGDGLFTILTTLSKKASTVHMMLQPILTYMACGYMGRQGSLATCQLSEPLLWFILRVLDTSDALKAFHDMGGVQLICNNMVTSTRAIVNTARSMVSTIMKFLDSGPNKAVDSTLKTRILASEPDNAEGIHNFAPLGTITSSSPTAQPAEVLLQATPPHRRARSAAWSYIFLPEEAWCDLTIHLPSAVLLKEIHIQPHLASLATCPSSVSVEVSADGVNMLPLSTPVVTSGLTYIKIQLVKAEVASAVCLRLHRPRDASTLGLSQIKLLGLTAFGTTSSATVNNPFLPSEDQVSKTSIGWLRLLHHCLTHISDLEGMMASAAAPTANLLQTCAALLMSPYCGMHSPNIEVVLVKIGLQSTRIGLKLIDILLRNCAASGSDPTDLNSPLLFGRLNGLSSDSTIDILYQLGTTQDPGTKDRIQALLKWVSDSAKMAALKRSGRMNYMCPSSSAVEYGLLMPSPSHLHCVAAILWHSYELLVEYDLPALLDRELFELLFNWSMSLPCNVVLKKAVDSLLCSMCHIHPNYFSLLMGWMGIIPPPVQCHHRLSMTDDSKKQDLSSSLTDDSKNAQAPLSLTESHLATLASSSQSPEAIKQLLDSGLPSLLVRSLASFCFSHISYSESIAQSVDNSQDKLRRHHVPQHCNKMPITADLVAPILRFLTEVGNSHIMKDWLGGSEVNPLWTALLFLLCHSGSTAGGHNLGAQQSSTRSASHSSATTTVLTTQQRTAIENATVAFFLQCISCHPNNQKLMAQVLCELFQTAPQRGSLPTSGNISGFVRRLFLQLMLEDEKVTMFLQSPCPLYKGRINATSHVIQHPMFGAGHKFRTLHLPVSTTLSDVLDRVSDTPSITAKLISEQKDDKEKKNHEEKEKVKAENGFQDNYSVVVASGLKSQSKRAMASTPPRPPSRRGRTIPDKIGSASSSADAASKIITVPVFHLFHRLLAGQPLPAEMTLAQLLTLLYDRKLPQGYRSIDLTVKLGSKVITDPSLSKTDSFKRLHPEKDHGDLVGSCPEDEALTPSDECMDGVLDESLLETCPIQSPLQVFAGMGGLALIAERLPMLYPEVIQQVSAPVIASTTQEKPKDSDQFEWVTIEQSGELVYEAPETIAAEPPPVKSAVQATSPIPAHSLAAFGLFLRLPGYAEVLLKERKHAQCLLRLVLGVTDDGEGSHILQSPSANVLPTLPFHVLRSLFSATPLTTDDGVLLRRMALEIGALHLILVCLSALSHHAPRVPNSSLSQTEPQVSNSHNPTSAEEQQLYWAKGTGFGTGSTASGWDVEQALTKQRLEEEHVTCLLQVLASYINPMSGAVNGEAQASPESRAQNSSALPSVLLELLSQSCLIPAMSSYLRNDSVLDMARHVPLYRALLELLRAIASCTSMVPLLLPLSTENGEEEEDEQSECQTSVGTLLAKMKTCVDTYTNRLRSKRENVKAGVKPDAPDQEPEGLALLVPDIQRTAEIVHAATANLRQANQEKKLGEYSKKVVMKPKPLSVLKSLEEKYVAVMKKLQFDTFEMVSEDDDGKLGFKVNYHYMSQVKNANDANSAARARRLAQEAVTLSTSLPLSSSSSVFVRCDEERLDIMKVLITGPADTPYANGCFEFDVYFPQDYPSSPPLVNLETTGGHSVRFNPNLYNDGKVCLSILNTWHGRPEEKWNPQTSSFLQVLVSVQSLILVAEPYFNEPGYERSRGTPSGTQSSREYDGNIRQATVKWAMLEQIRNPSPCFKEVIHKHFYLKRIELMAQCEEWIADIQQYSSDKRVGRTMSHHAAALKRHTAQLREELLKLPCPEGLDPDIEDASPVCRATAGAEDTLTHDHVNPSSSKDLPSDFQL</sequence>
<evidence type="ECO:0000250" key="1">
    <source>
        <dbReference type="UniProtKB" id="Q9NR09"/>
    </source>
</evidence>
<evidence type="ECO:0000255" key="2">
    <source>
        <dbReference type="PROSITE-ProRule" id="PRU00388"/>
    </source>
</evidence>
<evidence type="ECO:0000255" key="3">
    <source>
        <dbReference type="PROSITE-ProRule" id="PS50053"/>
    </source>
</evidence>
<evidence type="ECO:0000256" key="4">
    <source>
        <dbReference type="SAM" id="MobiDB-lite"/>
    </source>
</evidence>
<evidence type="ECO:0000269" key="5">
    <source>
    </source>
</evidence>
<evidence type="ECO:0000269" key="6">
    <source>
    </source>
</evidence>
<evidence type="ECO:0000269" key="7">
    <source>
    </source>
</evidence>
<evidence type="ECO:0000303" key="8">
    <source>
    </source>
</evidence>
<evidence type="ECO:0000303" key="9">
    <source>
    </source>
</evidence>
<evidence type="ECO:0000303" key="10">
    <source>
    </source>
</evidence>
<evidence type="ECO:0000305" key="11"/>
<evidence type="ECO:0007744" key="12">
    <source>
    </source>
</evidence>
<organism>
    <name type="scientific">Mus musculus</name>
    <name type="common">Mouse</name>
    <dbReference type="NCBI Taxonomy" id="10090"/>
    <lineage>
        <taxon>Eukaryota</taxon>
        <taxon>Metazoa</taxon>
        <taxon>Chordata</taxon>
        <taxon>Craniata</taxon>
        <taxon>Vertebrata</taxon>
        <taxon>Euteleostomi</taxon>
        <taxon>Mammalia</taxon>
        <taxon>Eutheria</taxon>
        <taxon>Euarchontoglires</taxon>
        <taxon>Glires</taxon>
        <taxon>Rodentia</taxon>
        <taxon>Myomorpha</taxon>
        <taxon>Muroidea</taxon>
        <taxon>Muridae</taxon>
        <taxon>Murinae</taxon>
        <taxon>Mus</taxon>
        <taxon>Mus</taxon>
    </lineage>
</organism>
<accession>O88738</accession>
<accession>E9PYU6</accession>
<accession>Q69ZM5</accession>
<accession>Q8BNX0</accession>
<accession>Q8BR72</accession>
<accession>Q8BRV7</accession>
<accession>Q8C737</accession>
<dbReference type="EC" id="2.3.2.24" evidence="1"/>
<dbReference type="EMBL" id="Y17267">
    <property type="protein sequence ID" value="CAA76720.1"/>
    <property type="status" value="ALT_INIT"/>
    <property type="molecule type" value="mRNA"/>
</dbReference>
<dbReference type="EMBL" id="AC098726">
    <property type="status" value="NOT_ANNOTATED_CDS"/>
    <property type="molecule type" value="Genomic_DNA"/>
</dbReference>
<dbReference type="EMBL" id="AC154442">
    <property type="status" value="NOT_ANNOTATED_CDS"/>
    <property type="molecule type" value="Genomic_DNA"/>
</dbReference>
<dbReference type="EMBL" id="AK041241">
    <property type="protein sequence ID" value="BAC30874.1"/>
    <property type="molecule type" value="mRNA"/>
</dbReference>
<dbReference type="EMBL" id="AK045446">
    <property type="protein sequence ID" value="BAC32373.1"/>
    <property type="status" value="ALT_INIT"/>
    <property type="molecule type" value="mRNA"/>
</dbReference>
<dbReference type="EMBL" id="AK052612">
    <property type="protein sequence ID" value="BAC35061.1"/>
    <property type="molecule type" value="mRNA"/>
</dbReference>
<dbReference type="EMBL" id="AK079995">
    <property type="protein sequence ID" value="BAC37801.1"/>
    <property type="status" value="ALT_INIT"/>
    <property type="molecule type" value="mRNA"/>
</dbReference>
<dbReference type="EMBL" id="AK173143">
    <property type="protein sequence ID" value="BAD32421.1"/>
    <property type="molecule type" value="Transcribed_RNA"/>
</dbReference>
<dbReference type="CCDS" id="CCDS37693.2">
    <molecule id="O88738-2"/>
</dbReference>
<dbReference type="PIR" id="T31067">
    <property type="entry name" value="T31067"/>
</dbReference>
<dbReference type="RefSeq" id="NP_001389698.1">
    <molecule id="O88738-1"/>
    <property type="nucleotide sequence ID" value="NM_001402769.1"/>
</dbReference>
<dbReference type="RefSeq" id="NP_031592.3">
    <molecule id="O88738-2"/>
    <property type="nucleotide sequence ID" value="NM_007566.3"/>
</dbReference>
<dbReference type="PDB" id="8IVQ">
    <property type="method" value="EM"/>
    <property type="resolution" value="3.60 A"/>
    <property type="chains" value="A/B=29-4882"/>
</dbReference>
<dbReference type="PDBsum" id="8IVQ"/>
<dbReference type="EMDB" id="EMD-35759"/>
<dbReference type="SMR" id="O88738"/>
<dbReference type="BioGRID" id="198389">
    <property type="interactions" value="19"/>
</dbReference>
<dbReference type="CORUM" id="O88738"/>
<dbReference type="FunCoup" id="O88738">
    <property type="interactions" value="4809"/>
</dbReference>
<dbReference type="IntAct" id="O88738">
    <property type="interactions" value="9"/>
</dbReference>
<dbReference type="MINT" id="O88738"/>
<dbReference type="STRING" id="10090.ENSMUSP00000136329"/>
<dbReference type="ChEMBL" id="CHEMBL4879421"/>
<dbReference type="MEROPS" id="I32.006"/>
<dbReference type="GlyGen" id="O88738">
    <property type="glycosylation" value="6 sites, 2 N-linked glycans (2 sites), 1 O-linked glycan (1 site)"/>
</dbReference>
<dbReference type="iPTMnet" id="O88738"/>
<dbReference type="PhosphoSitePlus" id="O88738"/>
<dbReference type="SwissPalm" id="O88738"/>
<dbReference type="jPOST" id="O88738"/>
<dbReference type="PaxDb" id="10090-ENSMUSP00000138333"/>
<dbReference type="PeptideAtlas" id="O88738"/>
<dbReference type="ProteomicsDB" id="273619">
    <molecule id="O88738-1"/>
</dbReference>
<dbReference type="ProteomicsDB" id="273620">
    <molecule id="O88738-2"/>
</dbReference>
<dbReference type="ProteomicsDB" id="273621">
    <molecule id="O88738-3"/>
</dbReference>
<dbReference type="Pumba" id="O88738"/>
<dbReference type="Antibodypedia" id="29188">
    <property type="antibodies" value="216 antibodies from 31 providers"/>
</dbReference>
<dbReference type="DNASU" id="12211"/>
<dbReference type="Ensembl" id="ENSMUST00000180037.8">
    <molecule id="O88738-2"/>
    <property type="protein sequence ID" value="ENSMUSP00000136329.2"/>
    <property type="gene ID" value="ENSMUSG00000024073.17"/>
</dbReference>
<dbReference type="Ensembl" id="ENSMUST00000182133.8">
    <molecule id="O88738-3"/>
    <property type="protein sequence ID" value="ENSMUSP00000138693.2"/>
    <property type="gene ID" value="ENSMUSG00000024073.17"/>
</dbReference>
<dbReference type="Ensembl" id="ENSMUST00000182597.8">
    <molecule id="O88738-1"/>
    <property type="protein sequence ID" value="ENSMUSP00000138333.2"/>
    <property type="gene ID" value="ENSMUSG00000024073.17"/>
</dbReference>
<dbReference type="GeneID" id="12211"/>
<dbReference type="KEGG" id="mmu:12211"/>
<dbReference type="UCSC" id="uc033hfd.1">
    <molecule id="O88738-2"/>
    <property type="organism name" value="mouse"/>
</dbReference>
<dbReference type="AGR" id="MGI:1276108"/>
<dbReference type="CTD" id="57448"/>
<dbReference type="MGI" id="MGI:1276108">
    <property type="gene designation" value="Birc6"/>
</dbReference>
<dbReference type="VEuPathDB" id="HostDB:ENSMUSG00000024073"/>
<dbReference type="eggNOG" id="KOG0895">
    <property type="taxonomic scope" value="Eukaryota"/>
</dbReference>
<dbReference type="eggNOG" id="KOG1101">
    <property type="taxonomic scope" value="Eukaryota"/>
</dbReference>
<dbReference type="GeneTree" id="ENSGT00940000156126"/>
<dbReference type="InParanoid" id="O88738"/>
<dbReference type="OMA" id="TTWDEHV"/>
<dbReference type="OrthoDB" id="2196114at2759"/>
<dbReference type="PhylomeDB" id="O88738"/>
<dbReference type="TreeFam" id="TF105357"/>
<dbReference type="BioGRID-ORCS" id="12211">
    <property type="hits" value="11 hits in 45 CRISPR screens"/>
</dbReference>
<dbReference type="ChiTaRS" id="Birc6">
    <property type="organism name" value="mouse"/>
</dbReference>
<dbReference type="PRO" id="PR:O88738"/>
<dbReference type="Proteomes" id="UP000000589">
    <property type="component" value="Chromosome 17"/>
</dbReference>
<dbReference type="RNAct" id="O88738">
    <property type="molecule type" value="protein"/>
</dbReference>
<dbReference type="Bgee" id="ENSMUSG00000024073">
    <property type="expression patterns" value="Expressed in embryonic post-anal tail and 272 other cell types or tissues"/>
</dbReference>
<dbReference type="ExpressionAtlas" id="O88738">
    <property type="expression patterns" value="baseline and differential"/>
</dbReference>
<dbReference type="GO" id="GO:0005813">
    <property type="term" value="C:centrosome"/>
    <property type="evidence" value="ECO:0007669"/>
    <property type="project" value="UniProtKB-SubCell"/>
</dbReference>
<dbReference type="GO" id="GO:0005768">
    <property type="term" value="C:endosome"/>
    <property type="evidence" value="ECO:0000250"/>
    <property type="project" value="UniProtKB"/>
</dbReference>
<dbReference type="GO" id="GO:0090543">
    <property type="term" value="C:Flemming body"/>
    <property type="evidence" value="ECO:0007669"/>
    <property type="project" value="UniProtKB-SubCell"/>
</dbReference>
<dbReference type="GO" id="GO:0016020">
    <property type="term" value="C:membrane"/>
    <property type="evidence" value="ECO:0000314"/>
    <property type="project" value="MGI"/>
</dbReference>
<dbReference type="GO" id="GO:0005815">
    <property type="term" value="C:microtubule organizing center"/>
    <property type="evidence" value="ECO:0000250"/>
    <property type="project" value="UniProtKB"/>
</dbReference>
<dbReference type="GO" id="GO:0030496">
    <property type="term" value="C:midbody"/>
    <property type="evidence" value="ECO:0000250"/>
    <property type="project" value="UniProtKB"/>
</dbReference>
<dbReference type="GO" id="GO:0000922">
    <property type="term" value="C:spindle pole"/>
    <property type="evidence" value="ECO:0007669"/>
    <property type="project" value="UniProtKB-SubCell"/>
</dbReference>
<dbReference type="GO" id="GO:0005802">
    <property type="term" value="C:trans-Golgi network"/>
    <property type="evidence" value="ECO:0000250"/>
    <property type="project" value="UniProtKB"/>
</dbReference>
<dbReference type="GO" id="GO:0004869">
    <property type="term" value="F:cysteine-type endopeptidase inhibitor activity"/>
    <property type="evidence" value="ECO:0000250"/>
    <property type="project" value="UniProtKB"/>
</dbReference>
<dbReference type="GO" id="GO:0046872">
    <property type="term" value="F:metal ion binding"/>
    <property type="evidence" value="ECO:0007669"/>
    <property type="project" value="UniProtKB-KW"/>
</dbReference>
<dbReference type="GO" id="GO:0061631">
    <property type="term" value="F:ubiquitin conjugating enzyme activity"/>
    <property type="evidence" value="ECO:0000314"/>
    <property type="project" value="MGI"/>
</dbReference>
<dbReference type="GO" id="GO:0006915">
    <property type="term" value="P:apoptotic process"/>
    <property type="evidence" value="ECO:0007669"/>
    <property type="project" value="UniProtKB-KW"/>
</dbReference>
<dbReference type="GO" id="GO:0051301">
    <property type="term" value="P:cell division"/>
    <property type="evidence" value="ECO:0007669"/>
    <property type="project" value="UniProtKB-KW"/>
</dbReference>
<dbReference type="GO" id="GO:0008283">
    <property type="term" value="P:cell population proliferation"/>
    <property type="evidence" value="ECO:0000315"/>
    <property type="project" value="MGI"/>
</dbReference>
<dbReference type="GO" id="GO:0060711">
    <property type="term" value="P:labyrinthine layer development"/>
    <property type="evidence" value="ECO:0000315"/>
    <property type="project" value="MGI"/>
</dbReference>
<dbReference type="GO" id="GO:0043066">
    <property type="term" value="P:negative regulation of apoptotic process"/>
    <property type="evidence" value="ECO:0000315"/>
    <property type="project" value="MGI"/>
</dbReference>
<dbReference type="GO" id="GO:2001237">
    <property type="term" value="P:negative regulation of extrinsic apoptotic signaling pathway"/>
    <property type="evidence" value="ECO:0007669"/>
    <property type="project" value="Ensembl"/>
</dbReference>
<dbReference type="GO" id="GO:0001890">
    <property type="term" value="P:placenta development"/>
    <property type="evidence" value="ECO:0000315"/>
    <property type="project" value="UniProtKB"/>
</dbReference>
<dbReference type="GO" id="GO:0008284">
    <property type="term" value="P:positive regulation of cell population proliferation"/>
    <property type="evidence" value="ECO:0000315"/>
    <property type="project" value="MGI"/>
</dbReference>
<dbReference type="GO" id="GO:0016567">
    <property type="term" value="P:protein ubiquitination"/>
    <property type="evidence" value="ECO:0000305"/>
    <property type="project" value="MGI"/>
</dbReference>
<dbReference type="GO" id="GO:0042127">
    <property type="term" value="P:regulation of cell population proliferation"/>
    <property type="evidence" value="ECO:0000315"/>
    <property type="project" value="MGI"/>
</dbReference>
<dbReference type="GO" id="GO:0032465">
    <property type="term" value="P:regulation of cytokinesis"/>
    <property type="evidence" value="ECO:0000250"/>
    <property type="project" value="UniProtKB"/>
</dbReference>
<dbReference type="GO" id="GO:0060712">
    <property type="term" value="P:spongiotrophoblast layer development"/>
    <property type="evidence" value="ECO:0000315"/>
    <property type="project" value="MGI"/>
</dbReference>
<dbReference type="CDD" id="cd00022">
    <property type="entry name" value="BIR"/>
    <property type="match status" value="1"/>
</dbReference>
<dbReference type="CDD" id="cd23810">
    <property type="entry name" value="UBCc_BIRC6"/>
    <property type="match status" value="1"/>
</dbReference>
<dbReference type="FunFam" id="3.10.110.10:FF:000014">
    <property type="entry name" value="Baculoviral IAP repeat-containing protein 6"/>
    <property type="match status" value="1"/>
</dbReference>
<dbReference type="FunFam" id="1.10.1170.10:FF:000001">
    <property type="entry name" value="baculoviral IAP repeat-containing protein 6 isoform X1"/>
    <property type="match status" value="1"/>
</dbReference>
<dbReference type="Gene3D" id="1.10.1170.10">
    <property type="entry name" value="Inhibitor Of Apoptosis Protein (2mihbC-IAP-1), Chain A"/>
    <property type="match status" value="1"/>
</dbReference>
<dbReference type="Gene3D" id="3.10.110.10">
    <property type="entry name" value="Ubiquitin Conjugating Enzyme"/>
    <property type="match status" value="1"/>
</dbReference>
<dbReference type="InterPro" id="IPR001370">
    <property type="entry name" value="BIR_rpt"/>
</dbReference>
<dbReference type="InterPro" id="IPR022103">
    <property type="entry name" value="BIRC6"/>
</dbReference>
<dbReference type="InterPro" id="IPR000608">
    <property type="entry name" value="UBQ-conjugat_E2_core"/>
</dbReference>
<dbReference type="InterPro" id="IPR016135">
    <property type="entry name" value="UBQ-conjugating_enzyme/RWD"/>
</dbReference>
<dbReference type="InterPro" id="IPR036322">
    <property type="entry name" value="WD40_repeat_dom_sf"/>
</dbReference>
<dbReference type="PANTHER" id="PTHR46116">
    <property type="entry name" value="(E3-INDEPENDENT) E2 UBIQUITIN-CONJUGATING ENZYME"/>
    <property type="match status" value="1"/>
</dbReference>
<dbReference type="PANTHER" id="PTHR46116:SF39">
    <property type="entry name" value="BACULOVIRAL IAP REPEAT-CONTAINING PROTEIN 6"/>
    <property type="match status" value="1"/>
</dbReference>
<dbReference type="Pfam" id="PF00653">
    <property type="entry name" value="BIR"/>
    <property type="match status" value="1"/>
</dbReference>
<dbReference type="Pfam" id="PF12356">
    <property type="entry name" value="BIRC6"/>
    <property type="match status" value="1"/>
</dbReference>
<dbReference type="Pfam" id="PF00179">
    <property type="entry name" value="UQ_con"/>
    <property type="match status" value="1"/>
</dbReference>
<dbReference type="SMART" id="SM00238">
    <property type="entry name" value="BIR"/>
    <property type="match status" value="1"/>
</dbReference>
<dbReference type="SMART" id="SM00212">
    <property type="entry name" value="UBCc"/>
    <property type="match status" value="1"/>
</dbReference>
<dbReference type="SUPFAM" id="SSF57924">
    <property type="entry name" value="Inhibitor of apoptosis (IAP) repeat"/>
    <property type="match status" value="1"/>
</dbReference>
<dbReference type="SUPFAM" id="SSF54495">
    <property type="entry name" value="UBC-like"/>
    <property type="match status" value="1"/>
</dbReference>
<dbReference type="SUPFAM" id="SSF50978">
    <property type="entry name" value="WD40 repeat-like"/>
    <property type="match status" value="1"/>
</dbReference>
<dbReference type="PROSITE" id="PS50143">
    <property type="entry name" value="BIR_REPEAT_2"/>
    <property type="match status" value="1"/>
</dbReference>
<dbReference type="PROSITE" id="PS50127">
    <property type="entry name" value="UBC_2"/>
    <property type="match status" value="1"/>
</dbReference>
<keyword id="KW-0002">3D-structure</keyword>
<keyword id="KW-0025">Alternative splicing</keyword>
<keyword id="KW-0053">Apoptosis</keyword>
<keyword id="KW-0131">Cell cycle</keyword>
<keyword id="KW-0132">Cell division</keyword>
<keyword id="KW-0963">Cytoplasm</keyword>
<keyword id="KW-0206">Cytoskeleton</keyword>
<keyword id="KW-0967">Endosome</keyword>
<keyword id="KW-0333">Golgi apparatus</keyword>
<keyword id="KW-0472">Membrane</keyword>
<keyword id="KW-0479">Metal-binding</keyword>
<keyword id="KW-0498">Mitosis</keyword>
<keyword id="KW-0597">Phosphoprotein</keyword>
<keyword id="KW-0646">Protease inhibitor</keyword>
<keyword id="KW-1185">Reference proteome</keyword>
<keyword id="KW-0677">Repeat</keyword>
<keyword id="KW-0789">Thiol protease inhibitor</keyword>
<keyword id="KW-0808">Transferase</keyword>
<keyword id="KW-0832">Ubl conjugation</keyword>
<keyword id="KW-0833">Ubl conjugation pathway</keyword>
<keyword id="KW-0853">WD repeat</keyword>
<keyword id="KW-0862">Zinc</keyword>
<name>BIRC6_MOUSE</name>
<feature type="chain" id="PRO_0000416247" description="Dual E2 ubiquitin-conjugating enzyme/E3 ubiquitin-protein ligase BIRC6">
    <location>
        <begin position="1"/>
        <end position="4882"/>
    </location>
</feature>
<feature type="repeat" description="WD 1" evidence="1">
    <location>
        <begin position="71"/>
        <end position="109"/>
    </location>
</feature>
<feature type="repeat" description="WD 2" evidence="1">
    <location>
        <begin position="110"/>
        <end position="139"/>
    </location>
</feature>
<feature type="repeat" description="BIR" evidence="1">
    <location>
        <begin position="292"/>
        <end position="362"/>
    </location>
</feature>
<feature type="repeat" description="WD 3" evidence="1">
    <location>
        <begin position="382"/>
        <end position="429"/>
    </location>
</feature>
<feature type="repeat" description="WD 4" evidence="1">
    <location>
        <begin position="504"/>
        <end position="723"/>
    </location>
</feature>
<feature type="repeat" description="WD 5" evidence="1">
    <location>
        <begin position="733"/>
        <end position="854"/>
    </location>
</feature>
<feature type="repeat" description="WD 6" evidence="1">
    <location>
        <begin position="855"/>
        <end position="931"/>
    </location>
</feature>
<feature type="repeat" description="WD 7" evidence="1">
    <location>
        <begin position="932"/>
        <end position="970"/>
    </location>
</feature>
<feature type="domain" description="Ubiquitin-like" evidence="1 3">
    <location>
        <begin position="3842"/>
        <end position="4092"/>
    </location>
</feature>
<feature type="domain" description="UBC core" evidence="2">
    <location>
        <begin position="4598"/>
        <end position="4765"/>
    </location>
</feature>
<feature type="region of interest" description="Disordered" evidence="4">
    <location>
        <begin position="468"/>
        <end position="502"/>
    </location>
</feature>
<feature type="region of interest" description="Disordered" evidence="4">
    <location>
        <begin position="542"/>
        <end position="561"/>
    </location>
</feature>
<feature type="region of interest" description="Disordered" evidence="4">
    <location>
        <begin position="582"/>
        <end position="622"/>
    </location>
</feature>
<feature type="region of interest" description="Disordered" evidence="4">
    <location>
        <begin position="1057"/>
        <end position="1077"/>
    </location>
</feature>
<feature type="region of interest" description="Disordered" evidence="4">
    <location>
        <begin position="2969"/>
        <end position="2998"/>
    </location>
</feature>
<feature type="region of interest" description="HRRAR loop; important for DIABLO/SMAC and HTRA2 binding" evidence="1">
    <location>
        <begin position="3212"/>
        <end position="3216"/>
    </location>
</feature>
<feature type="region of interest" description="Disordered" evidence="4">
    <location>
        <begin position="3908"/>
        <end position="3927"/>
    </location>
</feature>
<feature type="region of interest" description="Disordered" evidence="4">
    <location>
        <begin position="3943"/>
        <end position="3973"/>
    </location>
</feature>
<feature type="region of interest" description="Disordered" evidence="4">
    <location>
        <begin position="4285"/>
        <end position="4304"/>
    </location>
</feature>
<feature type="region of interest" description="Disordered" evidence="4">
    <location>
        <begin position="4857"/>
        <end position="4882"/>
    </location>
</feature>
<feature type="compositionally biased region" description="Acidic residues" evidence="4">
    <location>
        <begin position="475"/>
        <end position="485"/>
    </location>
</feature>
<feature type="compositionally biased region" description="Basic and acidic residues" evidence="4">
    <location>
        <begin position="551"/>
        <end position="561"/>
    </location>
</feature>
<feature type="compositionally biased region" description="Polar residues" evidence="4">
    <location>
        <begin position="582"/>
        <end position="591"/>
    </location>
</feature>
<feature type="compositionally biased region" description="Polar residues" evidence="4">
    <location>
        <begin position="598"/>
        <end position="622"/>
    </location>
</feature>
<feature type="compositionally biased region" description="Basic residues" evidence="4">
    <location>
        <begin position="1060"/>
        <end position="1069"/>
    </location>
</feature>
<feature type="compositionally biased region" description="Polar residues" evidence="4">
    <location>
        <begin position="4286"/>
        <end position="4304"/>
    </location>
</feature>
<feature type="compositionally biased region" description="Polar residues" evidence="4">
    <location>
        <begin position="4869"/>
        <end position="4882"/>
    </location>
</feature>
<feature type="active site" description="Glycyl thioester intermediate" evidence="2">
    <location>
        <position position="4691"/>
    </location>
</feature>
<feature type="binding site" evidence="1">
    <location>
        <position position="331"/>
    </location>
    <ligand>
        <name>Zn(2+)</name>
        <dbReference type="ChEBI" id="CHEBI:29105"/>
    </ligand>
</feature>
<feature type="binding site" evidence="1">
    <location>
        <position position="334"/>
    </location>
    <ligand>
        <name>Zn(2+)</name>
        <dbReference type="ChEBI" id="CHEBI:29105"/>
    </ligand>
</feature>
<feature type="binding site" evidence="1">
    <location>
        <position position="351"/>
    </location>
    <ligand>
        <name>Zn(2+)</name>
        <dbReference type="ChEBI" id="CHEBI:29105"/>
    </ligand>
</feature>
<feature type="binding site" evidence="1">
    <location>
        <position position="358"/>
    </location>
    <ligand>
        <name>Zn(2+)</name>
        <dbReference type="ChEBI" id="CHEBI:29105"/>
    </ligand>
</feature>
<feature type="modified residue" description="Phosphoserine" evidence="12">
    <location>
        <position position="476"/>
    </location>
</feature>
<feature type="modified residue" description="Phosphoserine" evidence="12">
    <location>
        <position position="483"/>
    </location>
</feature>
<feature type="modified residue" description="Phosphoserine" evidence="12">
    <location>
        <position position="485"/>
    </location>
</feature>
<feature type="modified residue" description="Phosphoserine" evidence="1">
    <location>
        <position position="584"/>
    </location>
</feature>
<feature type="modified residue" description="Phosphoserine" evidence="1">
    <location>
        <position position="593"/>
    </location>
</feature>
<feature type="modified residue" description="Phosphothreonine" evidence="1">
    <location>
        <position position="1724"/>
    </location>
</feature>
<feature type="modified residue" description="Phosphoserine" evidence="1">
    <location>
        <position position="2245"/>
    </location>
</feature>
<feature type="modified residue" description="Phosphoserine" evidence="1">
    <location>
        <position position="2978"/>
    </location>
</feature>
<feature type="modified residue" description="Phosphothreonine" evidence="1">
    <location>
        <position position="3954"/>
    </location>
</feature>
<feature type="modified residue" description="Phosphoserine" evidence="1">
    <location>
        <position position="4047"/>
    </location>
</feature>
<feature type="splice variant" id="VSP_042536" description="In isoform 3." evidence="9">
    <location>
        <begin position="2057"/>
        <end position="2062"/>
    </location>
</feature>
<feature type="splice variant" id="VSP_042537" description="In isoform 2 and isoform 3." evidence="9 10">
    <location>
        <begin position="2212"/>
        <end position="2220"/>
    </location>
</feature>
<feature type="sequence conflict" description="In Ref. 1; CAA76720." evidence="11" ref="1">
    <original>T</original>
    <variation>I</variation>
    <location>
        <position position="206"/>
    </location>
</feature>
<feature type="sequence conflict" description="In Ref. 3; BAC37801." evidence="11" ref="3">
    <original>S</original>
    <variation>R</variation>
    <location>
        <position position="552"/>
    </location>
</feature>
<feature type="sequence conflict" description="In Ref. 1; CAA76720." evidence="11" ref="1">
    <original>A</original>
    <variation>T</variation>
    <location>
        <position position="718"/>
    </location>
</feature>
<feature type="sequence conflict" description="In Ref. 1; CAA76720." evidence="11" ref="1">
    <original>G</original>
    <variation>R</variation>
    <location>
        <position position="2107"/>
    </location>
</feature>
<feature type="sequence conflict" description="In Ref. 1; CAA76720." evidence="11" ref="1">
    <original>C</original>
    <variation>G</variation>
    <location>
        <position position="2455"/>
    </location>
</feature>
<feature type="sequence conflict" description="In Ref. 1; CAA76720." evidence="11" ref="1">
    <original>T</original>
    <variation>I</variation>
    <location>
        <position position="2996"/>
    </location>
</feature>
<feature type="sequence conflict" description="In Ref. 3; BAC35061." evidence="11" ref="3">
    <original>R</original>
    <variation>K</variation>
    <location>
        <position position="3214"/>
    </location>
</feature>
<feature type="sequence conflict" description="In Ref. 1; CAA76720." evidence="11" ref="1">
    <original>S</original>
    <variation>T</variation>
    <location>
        <position position="3263"/>
    </location>
</feature>
<feature type="sequence conflict" description="In Ref. 1; CAA76720." evidence="11" ref="1">
    <original>M</original>
    <variation>V</variation>
    <location>
        <position position="3951"/>
    </location>
</feature>
<feature type="sequence conflict" description="In Ref. 1; CAA76720." evidence="11" ref="1">
    <original>I</original>
    <variation>V</variation>
    <location>
        <position position="3966"/>
    </location>
</feature>
<feature type="sequence conflict" description="In Ref. 1; CAA76720." evidence="11" ref="1">
    <original>V</original>
    <variation>M</variation>
    <location>
        <position position="4383"/>
    </location>
</feature>
<reference key="1">
    <citation type="journal article" date="1998" name="J. Cell Biol.">
        <title>A giant ubiquitin-conjugating enzyme related to IAP apoptosis inhibitors.</title>
        <authorList>
            <person name="Hauser H.P."/>
            <person name="Bardroff M."/>
            <person name="Pyrowolakis G."/>
            <person name="Jentsch S."/>
        </authorList>
    </citation>
    <scope>NUCLEOTIDE SEQUENCE [MRNA] (ISOFORM 2)</scope>
    <scope>FUNCTION</scope>
    <scope>TISSUE SPECIFICITY</scope>
    <source>
        <strain>C57BL/6J</strain>
        <tissue>Aorta</tissue>
        <tissue>Vein</tissue>
    </source>
</reference>
<reference key="2">
    <citation type="journal article" date="2009" name="PLoS Biol.">
        <title>Lineage-specific biology revealed by a finished genome assembly of the mouse.</title>
        <authorList>
            <person name="Church D.M."/>
            <person name="Goodstadt L."/>
            <person name="Hillier L.W."/>
            <person name="Zody M.C."/>
            <person name="Goldstein S."/>
            <person name="She X."/>
            <person name="Bult C.J."/>
            <person name="Agarwala R."/>
            <person name="Cherry J.L."/>
            <person name="DiCuccio M."/>
            <person name="Hlavina W."/>
            <person name="Kapustin Y."/>
            <person name="Meric P."/>
            <person name="Maglott D."/>
            <person name="Birtle Z."/>
            <person name="Marques A.C."/>
            <person name="Graves T."/>
            <person name="Zhou S."/>
            <person name="Teague B."/>
            <person name="Potamousis K."/>
            <person name="Churas C."/>
            <person name="Place M."/>
            <person name="Herschleb J."/>
            <person name="Runnheim R."/>
            <person name="Forrest D."/>
            <person name="Amos-Landgraf J."/>
            <person name="Schwartz D.C."/>
            <person name="Cheng Z."/>
            <person name="Lindblad-Toh K."/>
            <person name="Eichler E.E."/>
            <person name="Ponting C.P."/>
        </authorList>
    </citation>
    <scope>NUCLEOTIDE SEQUENCE [LARGE SCALE GENOMIC DNA]</scope>
    <source>
        <strain>C57BL/6J</strain>
    </source>
</reference>
<reference key="3">
    <citation type="journal article" date="2005" name="Science">
        <title>The transcriptional landscape of the mammalian genome.</title>
        <authorList>
            <person name="Carninci P."/>
            <person name="Kasukawa T."/>
            <person name="Katayama S."/>
            <person name="Gough J."/>
            <person name="Frith M.C."/>
            <person name="Maeda N."/>
            <person name="Oyama R."/>
            <person name="Ravasi T."/>
            <person name="Lenhard B."/>
            <person name="Wells C."/>
            <person name="Kodzius R."/>
            <person name="Shimokawa K."/>
            <person name="Bajic V.B."/>
            <person name="Brenner S.E."/>
            <person name="Batalov S."/>
            <person name="Forrest A.R."/>
            <person name="Zavolan M."/>
            <person name="Davis M.J."/>
            <person name="Wilming L.G."/>
            <person name="Aidinis V."/>
            <person name="Allen J.E."/>
            <person name="Ambesi-Impiombato A."/>
            <person name="Apweiler R."/>
            <person name="Aturaliya R.N."/>
            <person name="Bailey T.L."/>
            <person name="Bansal M."/>
            <person name="Baxter L."/>
            <person name="Beisel K.W."/>
            <person name="Bersano T."/>
            <person name="Bono H."/>
            <person name="Chalk A.M."/>
            <person name="Chiu K.P."/>
            <person name="Choudhary V."/>
            <person name="Christoffels A."/>
            <person name="Clutterbuck D.R."/>
            <person name="Crowe M.L."/>
            <person name="Dalla E."/>
            <person name="Dalrymple B.P."/>
            <person name="de Bono B."/>
            <person name="Della Gatta G."/>
            <person name="di Bernardo D."/>
            <person name="Down T."/>
            <person name="Engstrom P."/>
            <person name="Fagiolini M."/>
            <person name="Faulkner G."/>
            <person name="Fletcher C.F."/>
            <person name="Fukushima T."/>
            <person name="Furuno M."/>
            <person name="Futaki S."/>
            <person name="Gariboldi M."/>
            <person name="Georgii-Hemming P."/>
            <person name="Gingeras T.R."/>
            <person name="Gojobori T."/>
            <person name="Green R.E."/>
            <person name="Gustincich S."/>
            <person name="Harbers M."/>
            <person name="Hayashi Y."/>
            <person name="Hensch T.K."/>
            <person name="Hirokawa N."/>
            <person name="Hill D."/>
            <person name="Huminiecki L."/>
            <person name="Iacono M."/>
            <person name="Ikeo K."/>
            <person name="Iwama A."/>
            <person name="Ishikawa T."/>
            <person name="Jakt M."/>
            <person name="Kanapin A."/>
            <person name="Katoh M."/>
            <person name="Kawasawa Y."/>
            <person name="Kelso J."/>
            <person name="Kitamura H."/>
            <person name="Kitano H."/>
            <person name="Kollias G."/>
            <person name="Krishnan S.P."/>
            <person name="Kruger A."/>
            <person name="Kummerfeld S.K."/>
            <person name="Kurochkin I.V."/>
            <person name="Lareau L.F."/>
            <person name="Lazarevic D."/>
            <person name="Lipovich L."/>
            <person name="Liu J."/>
            <person name="Liuni S."/>
            <person name="McWilliam S."/>
            <person name="Madan Babu M."/>
            <person name="Madera M."/>
            <person name="Marchionni L."/>
            <person name="Matsuda H."/>
            <person name="Matsuzawa S."/>
            <person name="Miki H."/>
            <person name="Mignone F."/>
            <person name="Miyake S."/>
            <person name="Morris K."/>
            <person name="Mottagui-Tabar S."/>
            <person name="Mulder N."/>
            <person name="Nakano N."/>
            <person name="Nakauchi H."/>
            <person name="Ng P."/>
            <person name="Nilsson R."/>
            <person name="Nishiguchi S."/>
            <person name="Nishikawa S."/>
            <person name="Nori F."/>
            <person name="Ohara O."/>
            <person name="Okazaki Y."/>
            <person name="Orlando V."/>
            <person name="Pang K.C."/>
            <person name="Pavan W.J."/>
            <person name="Pavesi G."/>
            <person name="Pesole G."/>
            <person name="Petrovsky N."/>
            <person name="Piazza S."/>
            <person name="Reed J."/>
            <person name="Reid J.F."/>
            <person name="Ring B.Z."/>
            <person name="Ringwald M."/>
            <person name="Rost B."/>
            <person name="Ruan Y."/>
            <person name="Salzberg S.L."/>
            <person name="Sandelin A."/>
            <person name="Schneider C."/>
            <person name="Schoenbach C."/>
            <person name="Sekiguchi K."/>
            <person name="Semple C.A."/>
            <person name="Seno S."/>
            <person name="Sessa L."/>
            <person name="Sheng Y."/>
            <person name="Shibata Y."/>
            <person name="Shimada H."/>
            <person name="Shimada K."/>
            <person name="Silva D."/>
            <person name="Sinclair B."/>
            <person name="Sperling S."/>
            <person name="Stupka E."/>
            <person name="Sugiura K."/>
            <person name="Sultana R."/>
            <person name="Takenaka Y."/>
            <person name="Taki K."/>
            <person name="Tammoja K."/>
            <person name="Tan S.L."/>
            <person name="Tang S."/>
            <person name="Taylor M.S."/>
            <person name="Tegner J."/>
            <person name="Teichmann S.A."/>
            <person name="Ueda H.R."/>
            <person name="van Nimwegen E."/>
            <person name="Verardo R."/>
            <person name="Wei C.L."/>
            <person name="Yagi K."/>
            <person name="Yamanishi H."/>
            <person name="Zabarovsky E."/>
            <person name="Zhu S."/>
            <person name="Zimmer A."/>
            <person name="Hide W."/>
            <person name="Bult C."/>
            <person name="Grimmond S.M."/>
            <person name="Teasdale R.D."/>
            <person name="Liu E.T."/>
            <person name="Brusic V."/>
            <person name="Quackenbush J."/>
            <person name="Wahlestedt C."/>
            <person name="Mattick J.S."/>
            <person name="Hume D.A."/>
            <person name="Kai C."/>
            <person name="Sasaki D."/>
            <person name="Tomaru Y."/>
            <person name="Fukuda S."/>
            <person name="Kanamori-Katayama M."/>
            <person name="Suzuki M."/>
            <person name="Aoki J."/>
            <person name="Arakawa T."/>
            <person name="Iida J."/>
            <person name="Imamura K."/>
            <person name="Itoh M."/>
            <person name="Kato T."/>
            <person name="Kawaji H."/>
            <person name="Kawagashira N."/>
            <person name="Kawashima T."/>
            <person name="Kojima M."/>
            <person name="Kondo S."/>
            <person name="Konno H."/>
            <person name="Nakano K."/>
            <person name="Ninomiya N."/>
            <person name="Nishio T."/>
            <person name="Okada M."/>
            <person name="Plessy C."/>
            <person name="Shibata K."/>
            <person name="Shiraki T."/>
            <person name="Suzuki S."/>
            <person name="Tagami M."/>
            <person name="Waki K."/>
            <person name="Watahiki A."/>
            <person name="Okamura-Oho Y."/>
            <person name="Suzuki H."/>
            <person name="Kawai J."/>
            <person name="Hayashizaki Y."/>
        </authorList>
    </citation>
    <scope>NUCLEOTIDE SEQUENCE [LARGE SCALE MRNA] OF 18-893; 3091-3912 AND 4121-4523</scope>
    <source>
        <strain>C57BL/6J</strain>
        <tissue>Aorta</tissue>
        <tissue>Corpora quadrigemina</tissue>
        <tissue>Kidney</tissue>
        <tissue>Vein</tissue>
    </source>
</reference>
<reference key="4">
    <citation type="journal article" date="2004" name="DNA Res.">
        <title>Prediction of the coding sequences of mouse homologues of KIAA gene: IV. The complete nucleotide sequences of 500 mouse KIAA-homologous cDNAs identified by screening of terminal sequences of cDNA clones randomly sampled from size-fractionated libraries.</title>
        <authorList>
            <person name="Okazaki N."/>
            <person name="Kikuno R."/>
            <person name="Ohara R."/>
            <person name="Inamoto S."/>
            <person name="Koseki H."/>
            <person name="Hiraoka S."/>
            <person name="Saga Y."/>
            <person name="Seino S."/>
            <person name="Nishimura M."/>
            <person name="Kaisho T."/>
            <person name="Hoshino K."/>
            <person name="Kitamura H."/>
            <person name="Nagase T."/>
            <person name="Ohara O."/>
            <person name="Koga H."/>
        </authorList>
    </citation>
    <scope>NUCLEOTIDE SEQUENCE [LARGE SCALE MRNA] OF 1905-3034 (ISOFORM 3)</scope>
    <source>
        <tissue>Brain</tissue>
    </source>
</reference>
<reference key="5">
    <citation type="journal article" date="2004" name="Mol. Cell. Biol.">
        <title>BRUCE, a giant E2/E3 ubiquitin ligase and inhibitor of apoptosis protein of the trans-Golgi network, is required for normal placenta development and mouse survival.</title>
        <authorList>
            <person name="Lotz K."/>
            <person name="Pyrowolakis G."/>
            <person name="Jentsch S."/>
        </authorList>
    </citation>
    <scope>FUNCTION</scope>
    <scope>DISRUPTION PHENOTYPE</scope>
</reference>
<reference key="6">
    <citation type="journal article" date="2004" name="Nat. Cell Biol.">
        <title>Apollon ubiquitinates SMAC and caspase-9, and has an essential cytoprotection function.</title>
        <authorList>
            <person name="Hao Y."/>
            <person name="Sekine K."/>
            <person name="Kawabata A."/>
            <person name="Nakamura H."/>
            <person name="Ishioka T."/>
            <person name="Ohata H."/>
            <person name="Katayama R."/>
            <person name="Hashimoto C."/>
            <person name="Zhang X."/>
            <person name="Noda T."/>
            <person name="Tsuruo T."/>
            <person name="Naito M."/>
        </authorList>
    </citation>
    <scope>FUNCTION</scope>
    <scope>SUBUNIT</scope>
    <scope>INTERACTION WITH DIABLO/SMAC</scope>
</reference>
<reference key="7">
    <citation type="journal article" date="2007" name="Proc. Natl. Acad. Sci. U.S.A.">
        <title>Large-scale phosphorylation analysis of mouse liver.</title>
        <authorList>
            <person name="Villen J."/>
            <person name="Beausoleil S.A."/>
            <person name="Gerber S.A."/>
            <person name="Gygi S.P."/>
        </authorList>
    </citation>
    <scope>IDENTIFICATION BY MASS SPECTROMETRY [LARGE SCALE ANALYSIS]</scope>
    <source>
        <tissue>Liver</tissue>
    </source>
</reference>
<reference key="8">
    <citation type="journal article" date="2010" name="Cell">
        <title>A tissue-specific atlas of mouse protein phosphorylation and expression.</title>
        <authorList>
            <person name="Huttlin E.L."/>
            <person name="Jedrychowski M.P."/>
            <person name="Elias J.E."/>
            <person name="Goswami T."/>
            <person name="Rad R."/>
            <person name="Beausoleil S.A."/>
            <person name="Villen J."/>
            <person name="Haas W."/>
            <person name="Sowa M.E."/>
            <person name="Gygi S.P."/>
        </authorList>
    </citation>
    <scope>PHOSPHORYLATION [LARGE SCALE ANALYSIS] AT SER-476; SER-483 AND SER-485</scope>
    <scope>IDENTIFICATION BY MASS SPECTROMETRY [LARGE SCALE ANALYSIS]</scope>
    <source>
        <tissue>Brain</tissue>
        <tissue>Brown adipose tissue</tissue>
        <tissue>Heart</tissue>
        <tissue>Kidney</tissue>
        <tissue>Liver</tissue>
        <tissue>Lung</tissue>
        <tissue>Pancreas</tissue>
        <tissue>Spleen</tissue>
        <tissue>Testis</tissue>
    </source>
</reference>